<reference key="1">
    <citation type="journal article" date="1998" name="Nature">
        <title>The complete genome of the hyperthermophilic bacterium Aquifex aeolicus.</title>
        <authorList>
            <person name="Deckert G."/>
            <person name="Warren P.V."/>
            <person name="Gaasterland T."/>
            <person name="Young W.G."/>
            <person name="Lenox A.L."/>
            <person name="Graham D.E."/>
            <person name="Overbeek R."/>
            <person name="Snead M.A."/>
            <person name="Keller M."/>
            <person name="Aujay M."/>
            <person name="Huber R."/>
            <person name="Feldman R.A."/>
            <person name="Short J.M."/>
            <person name="Olsen G.J."/>
            <person name="Swanson R.V."/>
        </authorList>
    </citation>
    <scope>NUCLEOTIDE SEQUENCE [LARGE SCALE GENOMIC DNA]</scope>
    <source>
        <strain>VF5</strain>
    </source>
</reference>
<sequence length="190" mass="21050">MRVILASTSPRRSQILSLLGIEFEVIPAKVEEEVIPGKPVLTARKLAKEKALSVWRENRDAVVIGADTLVFLGNEIIGKPKDEKDAVNILKKLSGKWHSVVTALCVYSPEKVFLTHDIAKVKFRELSKEEIISYVKSGEPMDKAGAYGVQGFGATIVERIHGNFYTVMGLPIVKLYKILRELNLLAGTFS</sequence>
<name>NTPPA_AQUAE</name>
<comment type="function">
    <text evidence="1">Nucleoside triphosphate pyrophosphatase that hydrolyzes dTTP and UTP. May have a dual role in cell division arrest and in preventing the incorporation of modified nucleotides into cellular nucleic acids.</text>
</comment>
<comment type="catalytic activity">
    <reaction evidence="1">
        <text>dTTP + H2O = dTMP + diphosphate + H(+)</text>
        <dbReference type="Rhea" id="RHEA:28534"/>
        <dbReference type="ChEBI" id="CHEBI:15377"/>
        <dbReference type="ChEBI" id="CHEBI:15378"/>
        <dbReference type="ChEBI" id="CHEBI:33019"/>
        <dbReference type="ChEBI" id="CHEBI:37568"/>
        <dbReference type="ChEBI" id="CHEBI:63528"/>
        <dbReference type="EC" id="3.6.1.9"/>
    </reaction>
</comment>
<comment type="catalytic activity">
    <reaction evidence="1">
        <text>UTP + H2O = UMP + diphosphate + H(+)</text>
        <dbReference type="Rhea" id="RHEA:29395"/>
        <dbReference type="ChEBI" id="CHEBI:15377"/>
        <dbReference type="ChEBI" id="CHEBI:15378"/>
        <dbReference type="ChEBI" id="CHEBI:33019"/>
        <dbReference type="ChEBI" id="CHEBI:46398"/>
        <dbReference type="ChEBI" id="CHEBI:57865"/>
        <dbReference type="EC" id="3.6.1.9"/>
    </reaction>
</comment>
<comment type="cofactor">
    <cofactor evidence="1">
        <name>a divalent metal cation</name>
        <dbReference type="ChEBI" id="CHEBI:60240"/>
    </cofactor>
</comment>
<comment type="subcellular location">
    <subcellularLocation>
        <location evidence="1">Cytoplasm</location>
    </subcellularLocation>
</comment>
<comment type="similarity">
    <text evidence="1">Belongs to the Maf family. YhdE subfamily.</text>
</comment>
<gene>
    <name type="ordered locus">aq_1718</name>
</gene>
<accession>O67613</accession>
<feature type="chain" id="PRO_0000122990" description="dTTP/UTP pyrophosphatase">
    <location>
        <begin position="1"/>
        <end position="190"/>
    </location>
</feature>
<feature type="active site" description="Proton acceptor" evidence="1">
    <location>
        <position position="67"/>
    </location>
</feature>
<feature type="site" description="Important for substrate specificity" evidence="1">
    <location>
        <position position="11"/>
    </location>
</feature>
<feature type="site" description="Important for substrate specificity" evidence="1">
    <location>
        <position position="68"/>
    </location>
</feature>
<feature type="site" description="Important for substrate specificity" evidence="1">
    <location>
        <position position="150"/>
    </location>
</feature>
<keyword id="KW-0963">Cytoplasm</keyword>
<keyword id="KW-0378">Hydrolase</keyword>
<keyword id="KW-0546">Nucleotide metabolism</keyword>
<keyword id="KW-1185">Reference proteome</keyword>
<protein>
    <recommendedName>
        <fullName evidence="1">dTTP/UTP pyrophosphatase</fullName>
        <shortName evidence="1">dTTPase/UTPase</shortName>
        <ecNumber evidence="1">3.6.1.9</ecNumber>
    </recommendedName>
    <alternativeName>
        <fullName evidence="1">Nucleoside triphosphate pyrophosphatase</fullName>
    </alternativeName>
    <alternativeName>
        <fullName evidence="1">Nucleotide pyrophosphatase</fullName>
        <shortName evidence="1">Nucleotide PPase</shortName>
    </alternativeName>
</protein>
<proteinExistence type="inferred from homology"/>
<organism>
    <name type="scientific">Aquifex aeolicus (strain VF5)</name>
    <dbReference type="NCBI Taxonomy" id="224324"/>
    <lineage>
        <taxon>Bacteria</taxon>
        <taxon>Pseudomonadati</taxon>
        <taxon>Aquificota</taxon>
        <taxon>Aquificia</taxon>
        <taxon>Aquificales</taxon>
        <taxon>Aquificaceae</taxon>
        <taxon>Aquifex</taxon>
    </lineage>
</organism>
<evidence type="ECO:0000255" key="1">
    <source>
        <dbReference type="HAMAP-Rule" id="MF_00528"/>
    </source>
</evidence>
<dbReference type="EC" id="3.6.1.9" evidence="1"/>
<dbReference type="EMBL" id="AE000657">
    <property type="protein sequence ID" value="AAC07569.1"/>
    <property type="molecule type" value="Genomic_DNA"/>
</dbReference>
<dbReference type="PIR" id="C70448">
    <property type="entry name" value="C70448"/>
</dbReference>
<dbReference type="RefSeq" id="NP_214179.1">
    <property type="nucleotide sequence ID" value="NC_000918.1"/>
</dbReference>
<dbReference type="RefSeq" id="WP_010881116.1">
    <property type="nucleotide sequence ID" value="NC_000918.1"/>
</dbReference>
<dbReference type="SMR" id="O67613"/>
<dbReference type="FunCoup" id="O67613">
    <property type="interactions" value="281"/>
</dbReference>
<dbReference type="STRING" id="224324.aq_1718"/>
<dbReference type="EnsemblBacteria" id="AAC07569">
    <property type="protein sequence ID" value="AAC07569"/>
    <property type="gene ID" value="aq_1718"/>
</dbReference>
<dbReference type="KEGG" id="aae:aq_1718"/>
<dbReference type="PATRIC" id="fig|224324.8.peg.1320"/>
<dbReference type="eggNOG" id="COG0424">
    <property type="taxonomic scope" value="Bacteria"/>
</dbReference>
<dbReference type="HOGENOM" id="CLU_040416_0_0_0"/>
<dbReference type="InParanoid" id="O67613"/>
<dbReference type="OrthoDB" id="9807767at2"/>
<dbReference type="Proteomes" id="UP000000798">
    <property type="component" value="Chromosome"/>
</dbReference>
<dbReference type="GO" id="GO:0005737">
    <property type="term" value="C:cytoplasm"/>
    <property type="evidence" value="ECO:0007669"/>
    <property type="project" value="UniProtKB-SubCell"/>
</dbReference>
<dbReference type="GO" id="GO:0036218">
    <property type="term" value="F:dTTP diphosphatase activity"/>
    <property type="evidence" value="ECO:0007669"/>
    <property type="project" value="RHEA"/>
</dbReference>
<dbReference type="GO" id="GO:0047429">
    <property type="term" value="F:nucleoside triphosphate diphosphatase activity"/>
    <property type="evidence" value="ECO:0000318"/>
    <property type="project" value="GO_Central"/>
</dbReference>
<dbReference type="GO" id="GO:0036221">
    <property type="term" value="F:UTP diphosphatase activity"/>
    <property type="evidence" value="ECO:0007669"/>
    <property type="project" value="RHEA"/>
</dbReference>
<dbReference type="GO" id="GO:0009117">
    <property type="term" value="P:nucleotide metabolic process"/>
    <property type="evidence" value="ECO:0007669"/>
    <property type="project" value="UniProtKB-KW"/>
</dbReference>
<dbReference type="CDD" id="cd00555">
    <property type="entry name" value="Maf"/>
    <property type="match status" value="1"/>
</dbReference>
<dbReference type="FunFam" id="3.90.950.10:FF:000005">
    <property type="entry name" value="7-methyl-GTP pyrophosphatase"/>
    <property type="match status" value="1"/>
</dbReference>
<dbReference type="Gene3D" id="3.90.950.10">
    <property type="match status" value="1"/>
</dbReference>
<dbReference type="HAMAP" id="MF_00528">
    <property type="entry name" value="Maf"/>
    <property type="match status" value="1"/>
</dbReference>
<dbReference type="InterPro" id="IPR029001">
    <property type="entry name" value="ITPase-like_fam"/>
</dbReference>
<dbReference type="InterPro" id="IPR003697">
    <property type="entry name" value="Maf-like"/>
</dbReference>
<dbReference type="NCBIfam" id="TIGR00172">
    <property type="entry name" value="maf"/>
    <property type="match status" value="1"/>
</dbReference>
<dbReference type="PANTHER" id="PTHR43213">
    <property type="entry name" value="BIFUNCTIONAL DTTP/UTP PYROPHOSPHATASE/METHYLTRANSFERASE PROTEIN-RELATED"/>
    <property type="match status" value="1"/>
</dbReference>
<dbReference type="PANTHER" id="PTHR43213:SF5">
    <property type="entry name" value="BIFUNCTIONAL DTTP_UTP PYROPHOSPHATASE_METHYLTRANSFERASE PROTEIN-RELATED"/>
    <property type="match status" value="1"/>
</dbReference>
<dbReference type="Pfam" id="PF02545">
    <property type="entry name" value="Maf"/>
    <property type="match status" value="1"/>
</dbReference>
<dbReference type="PIRSF" id="PIRSF006305">
    <property type="entry name" value="Maf"/>
    <property type="match status" value="1"/>
</dbReference>
<dbReference type="SUPFAM" id="SSF52972">
    <property type="entry name" value="ITPase-like"/>
    <property type="match status" value="1"/>
</dbReference>